<feature type="chain" id="PRO_1000132460" description="Glycine dehydrogenase (decarboxylating)">
    <location>
        <begin position="1"/>
        <end position="955"/>
    </location>
</feature>
<feature type="modified residue" description="N6-(pyridoxal phosphate)lysine" evidence="1">
    <location>
        <position position="702"/>
    </location>
</feature>
<reference key="1">
    <citation type="journal article" date="2008" name="Genome Biol.">
        <title>The complete genome, comparative and functional analysis of Stenotrophomonas maltophilia reveals an organism heavily shielded by drug resistance determinants.</title>
        <authorList>
            <person name="Crossman L.C."/>
            <person name="Gould V.C."/>
            <person name="Dow J.M."/>
            <person name="Vernikos G.S."/>
            <person name="Okazaki A."/>
            <person name="Sebaihia M."/>
            <person name="Saunders D."/>
            <person name="Arrowsmith C."/>
            <person name="Carver T."/>
            <person name="Peters N."/>
            <person name="Adlem E."/>
            <person name="Kerhornou A."/>
            <person name="Lord A."/>
            <person name="Murphy L."/>
            <person name="Seeger K."/>
            <person name="Squares R."/>
            <person name="Rutter S."/>
            <person name="Quail M.A."/>
            <person name="Rajandream M.A."/>
            <person name="Harris D."/>
            <person name="Churcher C."/>
            <person name="Bentley S.D."/>
            <person name="Parkhill J."/>
            <person name="Thomson N.R."/>
            <person name="Avison M.B."/>
        </authorList>
    </citation>
    <scope>NUCLEOTIDE SEQUENCE [LARGE SCALE GENOMIC DNA]</scope>
    <source>
        <strain>K279a</strain>
    </source>
</reference>
<organism>
    <name type="scientific">Stenotrophomonas maltophilia (strain K279a)</name>
    <dbReference type="NCBI Taxonomy" id="522373"/>
    <lineage>
        <taxon>Bacteria</taxon>
        <taxon>Pseudomonadati</taxon>
        <taxon>Pseudomonadota</taxon>
        <taxon>Gammaproteobacteria</taxon>
        <taxon>Lysobacterales</taxon>
        <taxon>Lysobacteraceae</taxon>
        <taxon>Stenotrophomonas</taxon>
        <taxon>Stenotrophomonas maltophilia group</taxon>
    </lineage>
</organism>
<gene>
    <name evidence="1" type="primary">gcvP</name>
    <name type="ordered locus">Smlt3579</name>
</gene>
<accession>B2FQE7</accession>
<name>GCSP_STRMK</name>
<protein>
    <recommendedName>
        <fullName evidence="1">Glycine dehydrogenase (decarboxylating)</fullName>
        <ecNumber evidence="1">1.4.4.2</ecNumber>
    </recommendedName>
    <alternativeName>
        <fullName evidence="1">Glycine cleavage system P-protein</fullName>
    </alternativeName>
    <alternativeName>
        <fullName evidence="1">Glycine decarboxylase</fullName>
    </alternativeName>
    <alternativeName>
        <fullName evidence="1">Glycine dehydrogenase (aminomethyl-transferring)</fullName>
    </alternativeName>
</protein>
<proteinExistence type="inferred from homology"/>
<sequence length="955" mass="102998">MSQNTPSLRELEHHNAFVERHIGPNDAEIAQMLDVVGHASLDAMTDAIVPAKIKSPAPLALPESMTEVQALAKIRAIADKNTVLRSFIGQGYYGTHTPNVILRNILENPAWYTAYTPYQAEISQGRMEALINFQTLCADLTGMEIANASLLDEATAAAEAMTLAKRSAKSKSDTFFVHDAVHPQTLELLRTRAEPMGIVLRVGTPAEALEAEAFGLLLQYPDTFGQVGDYKALVDAVHARGGLVAVATDLLALTLLAAPGEWGADIVVGNSQRFGVPFGFGGPHAAFMACRDAYKRSMPGRLIGVSIDAQGNPAYRLTLQTREQHIRREKATSNICTAQVLLAVMASMYAVYHGPEGLTRIARRTHRLASILAAALRNAGVQVGGDFFDTLHVTGVHADEIHAKARAAGYNLRAIDSDSVGISLDETTTRADIVAVAAVFGASLDVDALDASTADALPAGLLRQSAFLTHPVFNTHHSEHELLRYLRSLADKDLAMDRTMIPLGSCTMKLNATAEMIPVTWPEFSQIHPLVPADQALGYKELIDTLEAMLVECTGYDAVSLQPNSGAQGEYAGLLAIRAYHRSRGEGHRDICLIPDSAHGTNPASAQMCGMKVVVTKTDANGNVDVEDIRLNAEKYSDRLAAIMMTYPSTHGVFEEEVVEICEIIHKHGGQVYTDGANMNALVGVAKPGKWGSDVSHLNLHKTFCIPHGGGGPGVGPCAVKEHLAPFLPGKLGDNGPVGMVSAASFGSASILPISWMYIAMMGREGLRKATQVAQLNANYIAKRLAPHFKTLYTGRNGLVAHECILDVRPLEKTSGIGAEDVAKRLIDFGFHAPTLSFPVAGTLMVEPTESESLHELDRFIDAMIQIREEITAIEDGRLDREDNPLKNAPHTATAVTASEWTHAYPRELAAFPLASLKQSKYWPPVARVDNVYGDKNVMCACIPVDAYKDDEVEA</sequence>
<dbReference type="EC" id="1.4.4.2" evidence="1"/>
<dbReference type="EMBL" id="AM743169">
    <property type="protein sequence ID" value="CAQ46996.1"/>
    <property type="molecule type" value="Genomic_DNA"/>
</dbReference>
<dbReference type="RefSeq" id="WP_005414179.1">
    <property type="nucleotide sequence ID" value="NC_010943.1"/>
</dbReference>
<dbReference type="SMR" id="B2FQE7"/>
<dbReference type="EnsemblBacteria" id="CAQ46996">
    <property type="protein sequence ID" value="CAQ46996"/>
    <property type="gene ID" value="Smlt3579"/>
</dbReference>
<dbReference type="KEGG" id="sml:Smlt3579"/>
<dbReference type="PATRIC" id="fig|522373.3.peg.3361"/>
<dbReference type="eggNOG" id="COG0403">
    <property type="taxonomic scope" value="Bacteria"/>
</dbReference>
<dbReference type="eggNOG" id="COG1003">
    <property type="taxonomic scope" value="Bacteria"/>
</dbReference>
<dbReference type="HOGENOM" id="CLU_004620_3_2_6"/>
<dbReference type="Proteomes" id="UP000008840">
    <property type="component" value="Chromosome"/>
</dbReference>
<dbReference type="GO" id="GO:0005829">
    <property type="term" value="C:cytosol"/>
    <property type="evidence" value="ECO:0007669"/>
    <property type="project" value="TreeGrafter"/>
</dbReference>
<dbReference type="GO" id="GO:0005960">
    <property type="term" value="C:glycine cleavage complex"/>
    <property type="evidence" value="ECO:0007669"/>
    <property type="project" value="TreeGrafter"/>
</dbReference>
<dbReference type="GO" id="GO:0016594">
    <property type="term" value="F:glycine binding"/>
    <property type="evidence" value="ECO:0007669"/>
    <property type="project" value="TreeGrafter"/>
</dbReference>
<dbReference type="GO" id="GO:0004375">
    <property type="term" value="F:glycine dehydrogenase (decarboxylating) activity"/>
    <property type="evidence" value="ECO:0007669"/>
    <property type="project" value="UniProtKB-EC"/>
</dbReference>
<dbReference type="GO" id="GO:0030170">
    <property type="term" value="F:pyridoxal phosphate binding"/>
    <property type="evidence" value="ECO:0007669"/>
    <property type="project" value="TreeGrafter"/>
</dbReference>
<dbReference type="GO" id="GO:0019464">
    <property type="term" value="P:glycine decarboxylation via glycine cleavage system"/>
    <property type="evidence" value="ECO:0007669"/>
    <property type="project" value="UniProtKB-UniRule"/>
</dbReference>
<dbReference type="CDD" id="cd00613">
    <property type="entry name" value="GDC-P"/>
    <property type="match status" value="2"/>
</dbReference>
<dbReference type="FunFam" id="3.40.640.10:FF:000005">
    <property type="entry name" value="Glycine dehydrogenase (decarboxylating), mitochondrial"/>
    <property type="match status" value="1"/>
</dbReference>
<dbReference type="FunFam" id="3.90.1150.10:FF:000007">
    <property type="entry name" value="Glycine dehydrogenase (decarboxylating), mitochondrial"/>
    <property type="match status" value="1"/>
</dbReference>
<dbReference type="FunFam" id="3.40.640.10:FF:000007">
    <property type="entry name" value="glycine dehydrogenase (Decarboxylating), mitochondrial"/>
    <property type="match status" value="1"/>
</dbReference>
<dbReference type="Gene3D" id="3.90.1150.10">
    <property type="entry name" value="Aspartate Aminotransferase, domain 1"/>
    <property type="match status" value="2"/>
</dbReference>
<dbReference type="Gene3D" id="3.40.640.10">
    <property type="entry name" value="Type I PLP-dependent aspartate aminotransferase-like (Major domain)"/>
    <property type="match status" value="2"/>
</dbReference>
<dbReference type="HAMAP" id="MF_00711">
    <property type="entry name" value="GcvP"/>
    <property type="match status" value="1"/>
</dbReference>
<dbReference type="InterPro" id="IPR003437">
    <property type="entry name" value="GcvP"/>
</dbReference>
<dbReference type="InterPro" id="IPR049316">
    <property type="entry name" value="GDC-P_C"/>
</dbReference>
<dbReference type="InterPro" id="IPR049315">
    <property type="entry name" value="GDC-P_N"/>
</dbReference>
<dbReference type="InterPro" id="IPR020581">
    <property type="entry name" value="GDC_P"/>
</dbReference>
<dbReference type="InterPro" id="IPR015424">
    <property type="entry name" value="PyrdxlP-dep_Trfase"/>
</dbReference>
<dbReference type="InterPro" id="IPR015421">
    <property type="entry name" value="PyrdxlP-dep_Trfase_major"/>
</dbReference>
<dbReference type="InterPro" id="IPR015422">
    <property type="entry name" value="PyrdxlP-dep_Trfase_small"/>
</dbReference>
<dbReference type="NCBIfam" id="TIGR00461">
    <property type="entry name" value="gcvP"/>
    <property type="match status" value="1"/>
</dbReference>
<dbReference type="NCBIfam" id="NF001696">
    <property type="entry name" value="PRK00451.1"/>
    <property type="match status" value="1"/>
</dbReference>
<dbReference type="NCBIfam" id="NF003346">
    <property type="entry name" value="PRK04366.1"/>
    <property type="match status" value="1"/>
</dbReference>
<dbReference type="PANTHER" id="PTHR11773:SF1">
    <property type="entry name" value="GLYCINE DEHYDROGENASE (DECARBOXYLATING), MITOCHONDRIAL"/>
    <property type="match status" value="1"/>
</dbReference>
<dbReference type="PANTHER" id="PTHR11773">
    <property type="entry name" value="GLYCINE DEHYDROGENASE, DECARBOXYLATING"/>
    <property type="match status" value="1"/>
</dbReference>
<dbReference type="Pfam" id="PF21478">
    <property type="entry name" value="GcvP2_C"/>
    <property type="match status" value="1"/>
</dbReference>
<dbReference type="Pfam" id="PF02347">
    <property type="entry name" value="GDC-P"/>
    <property type="match status" value="2"/>
</dbReference>
<dbReference type="SUPFAM" id="SSF53383">
    <property type="entry name" value="PLP-dependent transferases"/>
    <property type="match status" value="2"/>
</dbReference>
<evidence type="ECO:0000255" key="1">
    <source>
        <dbReference type="HAMAP-Rule" id="MF_00711"/>
    </source>
</evidence>
<keyword id="KW-0560">Oxidoreductase</keyword>
<keyword id="KW-0663">Pyridoxal phosphate</keyword>
<keyword id="KW-1185">Reference proteome</keyword>
<comment type="function">
    <text evidence="1">The glycine cleavage system catalyzes the degradation of glycine. The P protein binds the alpha-amino group of glycine through its pyridoxal phosphate cofactor; CO(2) is released and the remaining methylamine moiety is then transferred to the lipoamide cofactor of the H protein.</text>
</comment>
<comment type="catalytic activity">
    <reaction evidence="1">
        <text>N(6)-[(R)-lipoyl]-L-lysyl-[glycine-cleavage complex H protein] + glycine + H(+) = N(6)-[(R)-S(8)-aminomethyldihydrolipoyl]-L-lysyl-[glycine-cleavage complex H protein] + CO2</text>
        <dbReference type="Rhea" id="RHEA:24304"/>
        <dbReference type="Rhea" id="RHEA-COMP:10494"/>
        <dbReference type="Rhea" id="RHEA-COMP:10495"/>
        <dbReference type="ChEBI" id="CHEBI:15378"/>
        <dbReference type="ChEBI" id="CHEBI:16526"/>
        <dbReference type="ChEBI" id="CHEBI:57305"/>
        <dbReference type="ChEBI" id="CHEBI:83099"/>
        <dbReference type="ChEBI" id="CHEBI:83143"/>
        <dbReference type="EC" id="1.4.4.2"/>
    </reaction>
</comment>
<comment type="cofactor">
    <cofactor evidence="1">
        <name>pyridoxal 5'-phosphate</name>
        <dbReference type="ChEBI" id="CHEBI:597326"/>
    </cofactor>
</comment>
<comment type="subunit">
    <text evidence="1">The glycine cleavage system is composed of four proteins: P, T, L and H.</text>
</comment>
<comment type="similarity">
    <text evidence="1">Belongs to the GcvP family.</text>
</comment>